<accession>A9FSV7</accession>
<evidence type="ECO:0000255" key="1">
    <source>
        <dbReference type="HAMAP-Rule" id="MF_01631"/>
    </source>
</evidence>
<dbReference type="EC" id="2.7.7.23" evidence="1"/>
<dbReference type="EC" id="2.3.1.157" evidence="1"/>
<dbReference type="EMBL" id="AM746676">
    <property type="protein sequence ID" value="CAN95439.1"/>
    <property type="molecule type" value="Genomic_DNA"/>
</dbReference>
<dbReference type="RefSeq" id="WP_012237907.1">
    <property type="nucleotide sequence ID" value="NC_010162.1"/>
</dbReference>
<dbReference type="SMR" id="A9FSV7"/>
<dbReference type="STRING" id="448385.sce5276"/>
<dbReference type="KEGG" id="scl:sce5276"/>
<dbReference type="eggNOG" id="COG1207">
    <property type="taxonomic scope" value="Bacteria"/>
</dbReference>
<dbReference type="HOGENOM" id="CLU_029499_15_2_7"/>
<dbReference type="OrthoDB" id="9775031at2"/>
<dbReference type="BioCyc" id="SCEL448385:SCE_RS27080-MONOMER"/>
<dbReference type="UniPathway" id="UPA00113">
    <property type="reaction ID" value="UER00532"/>
</dbReference>
<dbReference type="UniPathway" id="UPA00113">
    <property type="reaction ID" value="UER00533"/>
</dbReference>
<dbReference type="UniPathway" id="UPA00973"/>
<dbReference type="Proteomes" id="UP000002139">
    <property type="component" value="Chromosome"/>
</dbReference>
<dbReference type="GO" id="GO:0005737">
    <property type="term" value="C:cytoplasm"/>
    <property type="evidence" value="ECO:0007669"/>
    <property type="project" value="UniProtKB-SubCell"/>
</dbReference>
<dbReference type="GO" id="GO:0016020">
    <property type="term" value="C:membrane"/>
    <property type="evidence" value="ECO:0007669"/>
    <property type="project" value="GOC"/>
</dbReference>
<dbReference type="GO" id="GO:0019134">
    <property type="term" value="F:glucosamine-1-phosphate N-acetyltransferase activity"/>
    <property type="evidence" value="ECO:0007669"/>
    <property type="project" value="UniProtKB-UniRule"/>
</dbReference>
<dbReference type="GO" id="GO:0000287">
    <property type="term" value="F:magnesium ion binding"/>
    <property type="evidence" value="ECO:0007669"/>
    <property type="project" value="UniProtKB-UniRule"/>
</dbReference>
<dbReference type="GO" id="GO:0003977">
    <property type="term" value="F:UDP-N-acetylglucosamine diphosphorylase activity"/>
    <property type="evidence" value="ECO:0007669"/>
    <property type="project" value="UniProtKB-UniRule"/>
</dbReference>
<dbReference type="GO" id="GO:0000902">
    <property type="term" value="P:cell morphogenesis"/>
    <property type="evidence" value="ECO:0007669"/>
    <property type="project" value="UniProtKB-UniRule"/>
</dbReference>
<dbReference type="GO" id="GO:0071555">
    <property type="term" value="P:cell wall organization"/>
    <property type="evidence" value="ECO:0007669"/>
    <property type="project" value="UniProtKB-KW"/>
</dbReference>
<dbReference type="GO" id="GO:0009245">
    <property type="term" value="P:lipid A biosynthetic process"/>
    <property type="evidence" value="ECO:0007669"/>
    <property type="project" value="UniProtKB-UniRule"/>
</dbReference>
<dbReference type="GO" id="GO:0009252">
    <property type="term" value="P:peptidoglycan biosynthetic process"/>
    <property type="evidence" value="ECO:0007669"/>
    <property type="project" value="UniProtKB-UniRule"/>
</dbReference>
<dbReference type="GO" id="GO:0008360">
    <property type="term" value="P:regulation of cell shape"/>
    <property type="evidence" value="ECO:0007669"/>
    <property type="project" value="UniProtKB-KW"/>
</dbReference>
<dbReference type="GO" id="GO:0006048">
    <property type="term" value="P:UDP-N-acetylglucosamine biosynthetic process"/>
    <property type="evidence" value="ECO:0007669"/>
    <property type="project" value="UniProtKB-UniPathway"/>
</dbReference>
<dbReference type="CDD" id="cd02540">
    <property type="entry name" value="GT2_GlmU_N_bac"/>
    <property type="match status" value="1"/>
</dbReference>
<dbReference type="CDD" id="cd03353">
    <property type="entry name" value="LbH_GlmU_C"/>
    <property type="match status" value="1"/>
</dbReference>
<dbReference type="Gene3D" id="2.160.10.10">
    <property type="entry name" value="Hexapeptide repeat proteins"/>
    <property type="match status" value="1"/>
</dbReference>
<dbReference type="Gene3D" id="3.90.550.10">
    <property type="entry name" value="Spore Coat Polysaccharide Biosynthesis Protein SpsA, Chain A"/>
    <property type="match status" value="1"/>
</dbReference>
<dbReference type="HAMAP" id="MF_01631">
    <property type="entry name" value="GlmU"/>
    <property type="match status" value="1"/>
</dbReference>
<dbReference type="InterPro" id="IPR005882">
    <property type="entry name" value="Bifunctional_GlmU"/>
</dbReference>
<dbReference type="InterPro" id="IPR050065">
    <property type="entry name" value="GlmU-like"/>
</dbReference>
<dbReference type="InterPro" id="IPR038009">
    <property type="entry name" value="GlmU_C_LbH"/>
</dbReference>
<dbReference type="InterPro" id="IPR001451">
    <property type="entry name" value="Hexapep"/>
</dbReference>
<dbReference type="InterPro" id="IPR018357">
    <property type="entry name" value="Hexapep_transf_CS"/>
</dbReference>
<dbReference type="InterPro" id="IPR025877">
    <property type="entry name" value="MobA-like_NTP_Trfase"/>
</dbReference>
<dbReference type="InterPro" id="IPR029044">
    <property type="entry name" value="Nucleotide-diphossugar_trans"/>
</dbReference>
<dbReference type="InterPro" id="IPR011004">
    <property type="entry name" value="Trimer_LpxA-like_sf"/>
</dbReference>
<dbReference type="NCBIfam" id="TIGR01173">
    <property type="entry name" value="glmU"/>
    <property type="match status" value="1"/>
</dbReference>
<dbReference type="PANTHER" id="PTHR43584:SF3">
    <property type="entry name" value="BIFUNCTIONAL PROTEIN GLMU"/>
    <property type="match status" value="1"/>
</dbReference>
<dbReference type="PANTHER" id="PTHR43584">
    <property type="entry name" value="NUCLEOTIDYL TRANSFERASE"/>
    <property type="match status" value="1"/>
</dbReference>
<dbReference type="Pfam" id="PF00132">
    <property type="entry name" value="Hexapep"/>
    <property type="match status" value="1"/>
</dbReference>
<dbReference type="Pfam" id="PF12804">
    <property type="entry name" value="NTP_transf_3"/>
    <property type="match status" value="1"/>
</dbReference>
<dbReference type="SUPFAM" id="SSF53448">
    <property type="entry name" value="Nucleotide-diphospho-sugar transferases"/>
    <property type="match status" value="1"/>
</dbReference>
<dbReference type="SUPFAM" id="SSF51161">
    <property type="entry name" value="Trimeric LpxA-like enzymes"/>
    <property type="match status" value="1"/>
</dbReference>
<dbReference type="PROSITE" id="PS00101">
    <property type="entry name" value="HEXAPEP_TRANSFERASES"/>
    <property type="match status" value="1"/>
</dbReference>
<comment type="function">
    <text evidence="1">Catalyzes the last two sequential reactions in the de novo biosynthetic pathway for UDP-N-acetylglucosamine (UDP-GlcNAc). The C-terminal domain catalyzes the transfer of acetyl group from acetyl coenzyme A to glucosamine-1-phosphate (GlcN-1-P) to produce N-acetylglucosamine-1-phosphate (GlcNAc-1-P), which is converted into UDP-GlcNAc by the transfer of uridine 5-monophosphate (from uridine 5-triphosphate), a reaction catalyzed by the N-terminal domain.</text>
</comment>
<comment type="catalytic activity">
    <reaction evidence="1">
        <text>alpha-D-glucosamine 1-phosphate + acetyl-CoA = N-acetyl-alpha-D-glucosamine 1-phosphate + CoA + H(+)</text>
        <dbReference type="Rhea" id="RHEA:13725"/>
        <dbReference type="ChEBI" id="CHEBI:15378"/>
        <dbReference type="ChEBI" id="CHEBI:57287"/>
        <dbReference type="ChEBI" id="CHEBI:57288"/>
        <dbReference type="ChEBI" id="CHEBI:57776"/>
        <dbReference type="ChEBI" id="CHEBI:58516"/>
        <dbReference type="EC" id="2.3.1.157"/>
    </reaction>
</comment>
<comment type="catalytic activity">
    <reaction evidence="1">
        <text>N-acetyl-alpha-D-glucosamine 1-phosphate + UTP + H(+) = UDP-N-acetyl-alpha-D-glucosamine + diphosphate</text>
        <dbReference type="Rhea" id="RHEA:13509"/>
        <dbReference type="ChEBI" id="CHEBI:15378"/>
        <dbReference type="ChEBI" id="CHEBI:33019"/>
        <dbReference type="ChEBI" id="CHEBI:46398"/>
        <dbReference type="ChEBI" id="CHEBI:57705"/>
        <dbReference type="ChEBI" id="CHEBI:57776"/>
        <dbReference type="EC" id="2.7.7.23"/>
    </reaction>
</comment>
<comment type="cofactor">
    <cofactor evidence="1">
        <name>Mg(2+)</name>
        <dbReference type="ChEBI" id="CHEBI:18420"/>
    </cofactor>
    <text evidence="1">Binds 1 Mg(2+) ion per subunit.</text>
</comment>
<comment type="pathway">
    <text evidence="1">Nucleotide-sugar biosynthesis; UDP-N-acetyl-alpha-D-glucosamine biosynthesis; N-acetyl-alpha-D-glucosamine 1-phosphate from alpha-D-glucosamine 6-phosphate (route II): step 2/2.</text>
</comment>
<comment type="pathway">
    <text evidence="1">Nucleotide-sugar biosynthesis; UDP-N-acetyl-alpha-D-glucosamine biosynthesis; UDP-N-acetyl-alpha-D-glucosamine from N-acetyl-alpha-D-glucosamine 1-phosphate: step 1/1.</text>
</comment>
<comment type="pathway">
    <text evidence="1">Bacterial outer membrane biogenesis; LPS lipid A biosynthesis.</text>
</comment>
<comment type="subunit">
    <text evidence="1">Homotrimer.</text>
</comment>
<comment type="subcellular location">
    <subcellularLocation>
        <location evidence="1">Cytoplasm</location>
    </subcellularLocation>
</comment>
<comment type="similarity">
    <text evidence="1">In the N-terminal section; belongs to the N-acetylglucosamine-1-phosphate uridyltransferase family.</text>
</comment>
<comment type="similarity">
    <text evidence="1">In the C-terminal section; belongs to the transferase hexapeptide repeat family.</text>
</comment>
<reference key="1">
    <citation type="journal article" date="2007" name="Nat. Biotechnol.">
        <title>Complete genome sequence of the myxobacterium Sorangium cellulosum.</title>
        <authorList>
            <person name="Schneiker S."/>
            <person name="Perlova O."/>
            <person name="Kaiser O."/>
            <person name="Gerth K."/>
            <person name="Alici A."/>
            <person name="Altmeyer M.O."/>
            <person name="Bartels D."/>
            <person name="Bekel T."/>
            <person name="Beyer S."/>
            <person name="Bode E."/>
            <person name="Bode H.B."/>
            <person name="Bolten C.J."/>
            <person name="Choudhuri J.V."/>
            <person name="Doss S."/>
            <person name="Elnakady Y.A."/>
            <person name="Frank B."/>
            <person name="Gaigalat L."/>
            <person name="Goesmann A."/>
            <person name="Groeger C."/>
            <person name="Gross F."/>
            <person name="Jelsbak L."/>
            <person name="Jelsbak L."/>
            <person name="Kalinowski J."/>
            <person name="Kegler C."/>
            <person name="Knauber T."/>
            <person name="Konietzny S."/>
            <person name="Kopp M."/>
            <person name="Krause L."/>
            <person name="Krug D."/>
            <person name="Linke B."/>
            <person name="Mahmud T."/>
            <person name="Martinez-Arias R."/>
            <person name="McHardy A.C."/>
            <person name="Merai M."/>
            <person name="Meyer F."/>
            <person name="Mormann S."/>
            <person name="Munoz-Dorado J."/>
            <person name="Perez J."/>
            <person name="Pradella S."/>
            <person name="Rachid S."/>
            <person name="Raddatz G."/>
            <person name="Rosenau F."/>
            <person name="Rueckert C."/>
            <person name="Sasse F."/>
            <person name="Scharfe M."/>
            <person name="Schuster S.C."/>
            <person name="Suen G."/>
            <person name="Treuner-Lange A."/>
            <person name="Velicer G.J."/>
            <person name="Vorholter F.-J."/>
            <person name="Weissman K.J."/>
            <person name="Welch R.D."/>
            <person name="Wenzel S.C."/>
            <person name="Whitworth D.E."/>
            <person name="Wilhelm S."/>
            <person name="Wittmann C."/>
            <person name="Bloecker H."/>
            <person name="Puehler A."/>
            <person name="Mueller R."/>
        </authorList>
    </citation>
    <scope>NUCLEOTIDE SEQUENCE [LARGE SCALE GENOMIC DNA]</scope>
    <source>
        <strain>So ce56</strain>
    </source>
</reference>
<protein>
    <recommendedName>
        <fullName evidence="1">Bifunctional protein GlmU</fullName>
    </recommendedName>
    <domain>
        <recommendedName>
            <fullName evidence="1">UDP-N-acetylglucosamine pyrophosphorylase</fullName>
            <ecNumber evidence="1">2.7.7.23</ecNumber>
        </recommendedName>
        <alternativeName>
            <fullName evidence="1">N-acetylglucosamine-1-phosphate uridyltransferase</fullName>
        </alternativeName>
    </domain>
    <domain>
        <recommendedName>
            <fullName evidence="1">Glucosamine-1-phosphate N-acetyltransferase</fullName>
            <ecNumber evidence="1">2.3.1.157</ecNumber>
        </recommendedName>
    </domain>
</protein>
<name>GLMU_SORC5</name>
<keyword id="KW-0012">Acyltransferase</keyword>
<keyword id="KW-0133">Cell shape</keyword>
<keyword id="KW-0961">Cell wall biogenesis/degradation</keyword>
<keyword id="KW-0963">Cytoplasm</keyword>
<keyword id="KW-0460">Magnesium</keyword>
<keyword id="KW-0479">Metal-binding</keyword>
<keyword id="KW-0511">Multifunctional enzyme</keyword>
<keyword id="KW-0548">Nucleotidyltransferase</keyword>
<keyword id="KW-0573">Peptidoglycan synthesis</keyword>
<keyword id="KW-1185">Reference proteome</keyword>
<keyword id="KW-0677">Repeat</keyword>
<keyword id="KW-0808">Transferase</keyword>
<sequence>MATQPTPLTAVVLAAGQGTRMKSARPKVLHELCGRPMLHYVVDAALAAGASDVVVVVGHGRDEVSAALDKAFGAQGKKVRTALQPQQRGTGDAVRCAMPHIDATSEAILILCGDTPLLDPEQLTQLRGALDRAGDAPIAMLTAEVSDPTGYGRILRDASGRVIGIREHKDATAEERAITEVNPGVYLARSGFLGRALAGLTTDNAQGELYLTDIVAQAAKAGGAAAVVARDVGSLVGINDRAQLAAAEEVLYGRIADRLRKSGVTIRTSARIDAGVLVEPDAVIEHAVVLRGRTRVGAGARIDVGSVLTDVVVEAGASVKPYTVASQSSIGAGAQIGPFSHLRPESQIEADAHIGNFVETKKTVVRKGAKANHLAYLGDGDIGEGANVGAGTIFCNYDGFRKHRTEIGAGAFIGSDSQIVAPVKIGAGAYVATGTTVTRDVPDEALAIGRVKQENKEGYATRLKARLKDAAKK</sequence>
<gene>
    <name evidence="1" type="primary">glmU</name>
    <name type="ordered locus">sce5276</name>
</gene>
<feature type="chain" id="PRO_0000337741" description="Bifunctional protein GlmU">
    <location>
        <begin position="1"/>
        <end position="473"/>
    </location>
</feature>
<feature type="region of interest" description="Pyrophosphorylase" evidence="1">
    <location>
        <begin position="1"/>
        <end position="241"/>
    </location>
</feature>
<feature type="region of interest" description="Linker" evidence="1">
    <location>
        <begin position="242"/>
        <end position="262"/>
    </location>
</feature>
<feature type="region of interest" description="N-acetyltransferase" evidence="1">
    <location>
        <begin position="263"/>
        <end position="473"/>
    </location>
</feature>
<feature type="active site" description="Proton acceptor" evidence="1">
    <location>
        <position position="373"/>
    </location>
</feature>
<feature type="binding site" evidence="1">
    <location>
        <begin position="13"/>
        <end position="16"/>
    </location>
    <ligand>
        <name>UDP-N-acetyl-alpha-D-glucosamine</name>
        <dbReference type="ChEBI" id="CHEBI:57705"/>
    </ligand>
</feature>
<feature type="binding site" evidence="1">
    <location>
        <position position="27"/>
    </location>
    <ligand>
        <name>UDP-N-acetyl-alpha-D-glucosamine</name>
        <dbReference type="ChEBI" id="CHEBI:57705"/>
    </ligand>
</feature>
<feature type="binding site" evidence="1">
    <location>
        <position position="84"/>
    </location>
    <ligand>
        <name>UDP-N-acetyl-alpha-D-glucosamine</name>
        <dbReference type="ChEBI" id="CHEBI:57705"/>
    </ligand>
</feature>
<feature type="binding site" evidence="1">
    <location>
        <begin position="89"/>
        <end position="90"/>
    </location>
    <ligand>
        <name>UDP-N-acetyl-alpha-D-glucosamine</name>
        <dbReference type="ChEBI" id="CHEBI:57705"/>
    </ligand>
</feature>
<feature type="binding site" evidence="1">
    <location>
        <position position="114"/>
    </location>
    <ligand>
        <name>Mg(2+)</name>
        <dbReference type="ChEBI" id="CHEBI:18420"/>
    </ligand>
</feature>
<feature type="binding site" evidence="1">
    <location>
        <position position="152"/>
    </location>
    <ligand>
        <name>UDP-N-acetyl-alpha-D-glucosamine</name>
        <dbReference type="ChEBI" id="CHEBI:57705"/>
    </ligand>
</feature>
<feature type="binding site" evidence="1">
    <location>
        <position position="167"/>
    </location>
    <ligand>
        <name>UDP-N-acetyl-alpha-D-glucosamine</name>
        <dbReference type="ChEBI" id="CHEBI:57705"/>
    </ligand>
</feature>
<feature type="binding site" evidence="1">
    <location>
        <position position="182"/>
    </location>
    <ligand>
        <name>UDP-N-acetyl-alpha-D-glucosamine</name>
        <dbReference type="ChEBI" id="CHEBI:57705"/>
    </ligand>
</feature>
<feature type="binding site" evidence="1">
    <location>
        <position position="239"/>
    </location>
    <ligand>
        <name>Mg(2+)</name>
        <dbReference type="ChEBI" id="CHEBI:18420"/>
    </ligand>
</feature>
<feature type="binding site" evidence="1">
    <location>
        <position position="239"/>
    </location>
    <ligand>
        <name>UDP-N-acetyl-alpha-D-glucosamine</name>
        <dbReference type="ChEBI" id="CHEBI:57705"/>
    </ligand>
</feature>
<feature type="binding site" evidence="1">
    <location>
        <position position="343"/>
    </location>
    <ligand>
        <name>UDP-N-acetyl-alpha-D-glucosamine</name>
        <dbReference type="ChEBI" id="CHEBI:57705"/>
    </ligand>
</feature>
<feature type="binding site" evidence="1">
    <location>
        <position position="361"/>
    </location>
    <ligand>
        <name>UDP-N-acetyl-alpha-D-glucosamine</name>
        <dbReference type="ChEBI" id="CHEBI:57705"/>
    </ligand>
</feature>
<feature type="binding site" evidence="1">
    <location>
        <position position="376"/>
    </location>
    <ligand>
        <name>UDP-N-acetyl-alpha-D-glucosamine</name>
        <dbReference type="ChEBI" id="CHEBI:57705"/>
    </ligand>
</feature>
<feature type="binding site" evidence="1">
    <location>
        <position position="387"/>
    </location>
    <ligand>
        <name>UDP-N-acetyl-alpha-D-glucosamine</name>
        <dbReference type="ChEBI" id="CHEBI:57705"/>
    </ligand>
</feature>
<feature type="binding site" evidence="1">
    <location>
        <position position="390"/>
    </location>
    <ligand>
        <name>acetyl-CoA</name>
        <dbReference type="ChEBI" id="CHEBI:57288"/>
    </ligand>
</feature>
<feature type="binding site" evidence="1">
    <location>
        <begin position="396"/>
        <end position="397"/>
    </location>
    <ligand>
        <name>acetyl-CoA</name>
        <dbReference type="ChEBI" id="CHEBI:57288"/>
    </ligand>
</feature>
<feature type="binding site" evidence="1">
    <location>
        <position position="415"/>
    </location>
    <ligand>
        <name>acetyl-CoA</name>
        <dbReference type="ChEBI" id="CHEBI:57288"/>
    </ligand>
</feature>
<feature type="binding site" evidence="1">
    <location>
        <position position="433"/>
    </location>
    <ligand>
        <name>acetyl-CoA</name>
        <dbReference type="ChEBI" id="CHEBI:57288"/>
    </ligand>
</feature>
<feature type="binding site" evidence="1">
    <location>
        <position position="450"/>
    </location>
    <ligand>
        <name>acetyl-CoA</name>
        <dbReference type="ChEBI" id="CHEBI:57288"/>
    </ligand>
</feature>
<proteinExistence type="inferred from homology"/>
<organism>
    <name type="scientific">Sorangium cellulosum (strain So ce56)</name>
    <name type="common">Polyangium cellulosum (strain So ce56)</name>
    <dbReference type="NCBI Taxonomy" id="448385"/>
    <lineage>
        <taxon>Bacteria</taxon>
        <taxon>Pseudomonadati</taxon>
        <taxon>Myxococcota</taxon>
        <taxon>Polyangia</taxon>
        <taxon>Polyangiales</taxon>
        <taxon>Polyangiaceae</taxon>
        <taxon>Sorangium</taxon>
    </lineage>
</organism>